<evidence type="ECO:0000255" key="1">
    <source>
        <dbReference type="HAMAP-Rule" id="MF_00037"/>
    </source>
</evidence>
<keyword id="KW-0131">Cell cycle</keyword>
<keyword id="KW-0132">Cell division</keyword>
<keyword id="KW-0133">Cell shape</keyword>
<keyword id="KW-0961">Cell wall biogenesis/degradation</keyword>
<keyword id="KW-0963">Cytoplasm</keyword>
<keyword id="KW-0274">FAD</keyword>
<keyword id="KW-0285">Flavoprotein</keyword>
<keyword id="KW-0521">NADP</keyword>
<keyword id="KW-0560">Oxidoreductase</keyword>
<keyword id="KW-0573">Peptidoglycan synthesis</keyword>
<keyword id="KW-1185">Reference proteome</keyword>
<accession>B2HQU8</accession>
<dbReference type="EC" id="1.3.1.98" evidence="1"/>
<dbReference type="EMBL" id="CP000854">
    <property type="protein sequence ID" value="ACC39268.1"/>
    <property type="molecule type" value="Genomic_DNA"/>
</dbReference>
<dbReference type="RefSeq" id="WP_012392749.1">
    <property type="nucleotide sequence ID" value="NC_010612.1"/>
</dbReference>
<dbReference type="SMR" id="B2HQU8"/>
<dbReference type="STRING" id="216594.MMAR_0808"/>
<dbReference type="GeneID" id="34342944"/>
<dbReference type="KEGG" id="mmi:MMAR_0808"/>
<dbReference type="eggNOG" id="COG0812">
    <property type="taxonomic scope" value="Bacteria"/>
</dbReference>
<dbReference type="HOGENOM" id="CLU_035304_0_1_11"/>
<dbReference type="OrthoDB" id="9804753at2"/>
<dbReference type="UniPathway" id="UPA00219"/>
<dbReference type="Proteomes" id="UP000001190">
    <property type="component" value="Chromosome"/>
</dbReference>
<dbReference type="GO" id="GO:0005829">
    <property type="term" value="C:cytosol"/>
    <property type="evidence" value="ECO:0007669"/>
    <property type="project" value="TreeGrafter"/>
</dbReference>
<dbReference type="GO" id="GO:0071949">
    <property type="term" value="F:FAD binding"/>
    <property type="evidence" value="ECO:0007669"/>
    <property type="project" value="InterPro"/>
</dbReference>
<dbReference type="GO" id="GO:0008762">
    <property type="term" value="F:UDP-N-acetylmuramate dehydrogenase activity"/>
    <property type="evidence" value="ECO:0007669"/>
    <property type="project" value="UniProtKB-UniRule"/>
</dbReference>
<dbReference type="GO" id="GO:0051301">
    <property type="term" value="P:cell division"/>
    <property type="evidence" value="ECO:0007669"/>
    <property type="project" value="UniProtKB-KW"/>
</dbReference>
<dbReference type="GO" id="GO:0071555">
    <property type="term" value="P:cell wall organization"/>
    <property type="evidence" value="ECO:0007669"/>
    <property type="project" value="UniProtKB-KW"/>
</dbReference>
<dbReference type="GO" id="GO:0009252">
    <property type="term" value="P:peptidoglycan biosynthetic process"/>
    <property type="evidence" value="ECO:0007669"/>
    <property type="project" value="UniProtKB-UniRule"/>
</dbReference>
<dbReference type="GO" id="GO:0008360">
    <property type="term" value="P:regulation of cell shape"/>
    <property type="evidence" value="ECO:0007669"/>
    <property type="project" value="UniProtKB-KW"/>
</dbReference>
<dbReference type="Gene3D" id="3.30.465.10">
    <property type="match status" value="1"/>
</dbReference>
<dbReference type="Gene3D" id="3.90.78.10">
    <property type="entry name" value="UDP-N-acetylenolpyruvoylglucosamine reductase, C-terminal domain"/>
    <property type="match status" value="1"/>
</dbReference>
<dbReference type="Gene3D" id="3.30.43.10">
    <property type="entry name" value="Uridine Diphospho-n-acetylenolpyruvylglucosamine Reductase, domain 2"/>
    <property type="match status" value="1"/>
</dbReference>
<dbReference type="HAMAP" id="MF_00037">
    <property type="entry name" value="MurB"/>
    <property type="match status" value="1"/>
</dbReference>
<dbReference type="InterPro" id="IPR016166">
    <property type="entry name" value="FAD-bd_PCMH"/>
</dbReference>
<dbReference type="InterPro" id="IPR036318">
    <property type="entry name" value="FAD-bd_PCMH-like_sf"/>
</dbReference>
<dbReference type="InterPro" id="IPR016167">
    <property type="entry name" value="FAD-bd_PCMH_sub1"/>
</dbReference>
<dbReference type="InterPro" id="IPR016169">
    <property type="entry name" value="FAD-bd_PCMH_sub2"/>
</dbReference>
<dbReference type="InterPro" id="IPR003170">
    <property type="entry name" value="MurB"/>
</dbReference>
<dbReference type="InterPro" id="IPR011601">
    <property type="entry name" value="MurB_C"/>
</dbReference>
<dbReference type="InterPro" id="IPR036635">
    <property type="entry name" value="MurB_C_sf"/>
</dbReference>
<dbReference type="InterPro" id="IPR006094">
    <property type="entry name" value="Oxid_FAD_bind_N"/>
</dbReference>
<dbReference type="NCBIfam" id="TIGR00179">
    <property type="entry name" value="murB"/>
    <property type="match status" value="1"/>
</dbReference>
<dbReference type="NCBIfam" id="NF010478">
    <property type="entry name" value="PRK13903.1"/>
    <property type="match status" value="1"/>
</dbReference>
<dbReference type="PANTHER" id="PTHR21071">
    <property type="entry name" value="UDP-N-ACETYLENOLPYRUVOYLGLUCOSAMINE REDUCTASE"/>
    <property type="match status" value="1"/>
</dbReference>
<dbReference type="PANTHER" id="PTHR21071:SF4">
    <property type="entry name" value="UDP-N-ACETYLENOLPYRUVOYLGLUCOSAMINE REDUCTASE"/>
    <property type="match status" value="1"/>
</dbReference>
<dbReference type="Pfam" id="PF01565">
    <property type="entry name" value="FAD_binding_4"/>
    <property type="match status" value="1"/>
</dbReference>
<dbReference type="Pfam" id="PF02873">
    <property type="entry name" value="MurB_C"/>
    <property type="match status" value="1"/>
</dbReference>
<dbReference type="SUPFAM" id="SSF56176">
    <property type="entry name" value="FAD-binding/transporter-associated domain-like"/>
    <property type="match status" value="1"/>
</dbReference>
<dbReference type="SUPFAM" id="SSF56194">
    <property type="entry name" value="Uridine diphospho-N-Acetylenolpyruvylglucosamine reductase, MurB, C-terminal domain"/>
    <property type="match status" value="1"/>
</dbReference>
<dbReference type="PROSITE" id="PS51387">
    <property type="entry name" value="FAD_PCMH"/>
    <property type="match status" value="1"/>
</dbReference>
<reference key="1">
    <citation type="journal article" date="2008" name="Genome Res.">
        <title>Insights from the complete genome sequence of Mycobacterium marinum on the evolution of Mycobacterium tuberculosis.</title>
        <authorList>
            <person name="Stinear T.P."/>
            <person name="Seemann T."/>
            <person name="Harrison P.F."/>
            <person name="Jenkin G.A."/>
            <person name="Davies J.K."/>
            <person name="Johnson P.D."/>
            <person name="Abdellah Z."/>
            <person name="Arrowsmith C."/>
            <person name="Chillingworth T."/>
            <person name="Churcher C."/>
            <person name="Clarke K."/>
            <person name="Cronin A."/>
            <person name="Davis P."/>
            <person name="Goodhead I."/>
            <person name="Holroyd N."/>
            <person name="Jagels K."/>
            <person name="Lord A."/>
            <person name="Moule S."/>
            <person name="Mungall K."/>
            <person name="Norbertczak H."/>
            <person name="Quail M.A."/>
            <person name="Rabbinowitsch E."/>
            <person name="Walker D."/>
            <person name="White B."/>
            <person name="Whitehead S."/>
            <person name="Small P.L."/>
            <person name="Brosch R."/>
            <person name="Ramakrishnan L."/>
            <person name="Fischbach M.A."/>
            <person name="Parkhill J."/>
            <person name="Cole S.T."/>
        </authorList>
    </citation>
    <scope>NUCLEOTIDE SEQUENCE [LARGE SCALE GENOMIC DNA]</scope>
    <source>
        <strain>ATCC BAA-535 / M</strain>
    </source>
</reference>
<feature type="chain" id="PRO_1000191435" description="UDP-N-acetylenolpyruvoylglucosamine reductase">
    <location>
        <begin position="1"/>
        <end position="366"/>
    </location>
</feature>
<feature type="domain" description="FAD-binding PCMH-type" evidence="1">
    <location>
        <begin position="29"/>
        <end position="203"/>
    </location>
</feature>
<feature type="active site" evidence="1">
    <location>
        <position position="177"/>
    </location>
</feature>
<feature type="active site" description="Proton donor" evidence="1">
    <location>
        <position position="258"/>
    </location>
</feature>
<feature type="active site" evidence="1">
    <location>
        <position position="358"/>
    </location>
</feature>
<name>MURB_MYCMM</name>
<organism>
    <name type="scientific">Mycobacterium marinum (strain ATCC BAA-535 / M)</name>
    <dbReference type="NCBI Taxonomy" id="216594"/>
    <lineage>
        <taxon>Bacteria</taxon>
        <taxon>Bacillati</taxon>
        <taxon>Actinomycetota</taxon>
        <taxon>Actinomycetes</taxon>
        <taxon>Mycobacteriales</taxon>
        <taxon>Mycobacteriaceae</taxon>
        <taxon>Mycobacterium</taxon>
        <taxon>Mycobacterium ulcerans group</taxon>
    </lineage>
</organism>
<proteinExistence type="inferred from homology"/>
<sequence>MKRRDVGSLFAGARVAESVPLAPLTTLRVGPVARTLVTCDTTDQVVGVLRELDDRARNGDCGPVLVFAGGSNVVIGDALADLTVVRVANDRVTIDGNLVRAEAGAVWDEVVVAAIERGLGGLECLSGIPGSAGATPVQNVGAYGVEVSDVITRVRLLDRSTGEVSWVPAADLSFGYRTSVLKQADGLALPAVVLEVEFALDASGRSAPLRYGELTAALGMNSGERGEPRAVRDAVLALRARKGMVLDAADHDTWSVGSFFTNPVVAPEIYERLAAQTGESVPHYPAPDGVKLAAGWLLERAGFGKGYPGDPHARCRLSSKHALALTNRGGATAADVMVLARTVRDGVRDVFGITLKPEPVLVGCAL</sequence>
<comment type="function">
    <text evidence="1">Cell wall formation.</text>
</comment>
<comment type="catalytic activity">
    <reaction evidence="1">
        <text>UDP-N-acetyl-alpha-D-muramate + NADP(+) = UDP-N-acetyl-3-O-(1-carboxyvinyl)-alpha-D-glucosamine + NADPH + H(+)</text>
        <dbReference type="Rhea" id="RHEA:12248"/>
        <dbReference type="ChEBI" id="CHEBI:15378"/>
        <dbReference type="ChEBI" id="CHEBI:57783"/>
        <dbReference type="ChEBI" id="CHEBI:58349"/>
        <dbReference type="ChEBI" id="CHEBI:68483"/>
        <dbReference type="ChEBI" id="CHEBI:70757"/>
        <dbReference type="EC" id="1.3.1.98"/>
    </reaction>
</comment>
<comment type="cofactor">
    <cofactor evidence="1">
        <name>FAD</name>
        <dbReference type="ChEBI" id="CHEBI:57692"/>
    </cofactor>
</comment>
<comment type="pathway">
    <text evidence="1">Cell wall biogenesis; peptidoglycan biosynthesis.</text>
</comment>
<comment type="subcellular location">
    <subcellularLocation>
        <location evidence="1">Cytoplasm</location>
    </subcellularLocation>
</comment>
<comment type="similarity">
    <text evidence="1">Belongs to the MurB family.</text>
</comment>
<protein>
    <recommendedName>
        <fullName evidence="1">UDP-N-acetylenolpyruvoylglucosamine reductase</fullName>
        <ecNumber evidence="1">1.3.1.98</ecNumber>
    </recommendedName>
    <alternativeName>
        <fullName evidence="1">UDP-N-acetylmuramate dehydrogenase</fullName>
    </alternativeName>
</protein>
<gene>
    <name evidence="1" type="primary">murB</name>
    <name type="ordered locus">MMAR_0808</name>
</gene>